<gene>
    <name type="primary">HEATR1</name>
    <name type="synonym">BAP28</name>
    <name type="ORF">QnpA-17571</name>
</gene>
<accession>Q9GM44</accession>
<comment type="function">
    <text evidence="1">Ribosome biogenesis factor; required for recruitment of Myc to nucleoli. Involved in nucleolar processing of pre-18S ribosomal RNA. Required for optimal pre-ribosomal RNA transcription by RNA polymerase I. Part of the small subunit (SSU) processome, first precursor of the small eukaryotic ribosomal subunit. During the assembly of the SSU processome in the nucleolus, many ribosome biogenesis factors, an RNA chaperone and ribosomal proteins associate with the nascent pre-rRNA and work in concert to generate RNA folding, modifications, rearrangements and cleavage as well as targeted degradation of pre-ribosomal RNA by the RNA exosome. Involved in neuronal-lineage cell proliferation.</text>
</comment>
<comment type="subunit">
    <text evidence="1">Part of the small subunit (SSU) processome, composed of more than 70 proteins and the RNA chaperone small nucleolar RNA (snoRNA) U3. Interacts with MYC; the interaction is required for localization of MYC to the nucleolus.</text>
</comment>
<comment type="subcellular location">
    <subcellularLocation>
        <location evidence="1">Nucleus</location>
        <location evidence="1">Nucleolus</location>
    </subcellularLocation>
</comment>
<comment type="similarity">
    <text evidence="3">Belongs to the HEATR1/UTP10 family.</text>
</comment>
<comment type="sequence caution" evidence="3">
    <conflict type="erroneous initiation">
        <sequence resource="EMBL-CDS" id="BAB16728"/>
    </conflict>
    <text>Extended N-terminus.</text>
</comment>
<evidence type="ECO:0000250" key="1">
    <source>
        <dbReference type="UniProtKB" id="Q9H583"/>
    </source>
</evidence>
<evidence type="ECO:0000255" key="2">
    <source>
        <dbReference type="PROSITE-ProRule" id="PRU00103"/>
    </source>
</evidence>
<evidence type="ECO:0000305" key="3"/>
<name>HEAT1_MACFA</name>
<reference key="1">
    <citation type="submission" date="2000-10" db="EMBL/GenBank/DDBJ databases">
        <title>Isolation of full-length cDNA clones from macaque brain cDNA libraries.</title>
        <authorList>
            <person name="Osada N."/>
            <person name="Hida M."/>
            <person name="Kusuda J."/>
            <person name="Tanuma R."/>
            <person name="Iseki K."/>
            <person name="Hirai M."/>
            <person name="Terao K."/>
            <person name="Suzuki Y."/>
            <person name="Sugano S."/>
            <person name="Hashimoto K."/>
        </authorList>
    </citation>
    <scope>NUCLEOTIDE SEQUENCE [LARGE SCALE MRNA]</scope>
    <source>
        <tissue>Parietal cortex</tissue>
    </source>
</reference>
<sequence length="958" mass="108645">QKKSQDLESVQEVGGSYWQRVTLILELLQHKKKLKSPQILVPTLFNLLSRCLEPLPQEQGNMEYTKQLILSCLLNICQKLSPDGGKIPKDVLDEEKFNVELIVQCVRLSEMAQTHHHALLLLGTVAGIFPDKVLHNIMSIFTFMGANVMRLDDTYSFQVINKTVKMVIPALIQSDSGDSIEVSRNVEEIVVKIISVFVDALPHVPEHRRLPILVQLVDTLGAEKFLWVLLILLFEQYVTKTVLAAAYGEKDAILEADTEFWFSVCCEFSVQHQIQSLMNILQYLLKLPEEKEETISKAVSNKSESQEEMLQIFNVETHTSKQLRHFKFLSVSFMSQLLSSNNFLKKVVESGGPEILKGLEERLLETVLGYINAVAQSMERNADKLTVKFWRALLSKAYDLLDKVNALLPTETFIPVIRGLVGNRLPSVRRKALDLLNNKLQQNISWKKTIVTRFLKLVPDLLAIVQRKKKEGEEEQAINRQTALYTLKLLCKNFGAENPDPFVPVLSTAVKLIAPERKEEKNVLGSALLCVAEVTSTLQALAVPQLPSLMPSLLTTMKNTSELVSSEVYLLSALAALQKVVETLPHFISPYLEGILSQVIHLEKITSEVGSASSQANIRLTSLKKTLATTLAPRVLLPAIRKTYKQIEKNWKNHMGPFMSILQEHIGVMKKEELTSHQSQLTAFFLEALDFRAQHSENDLEEVGRTENCIIDCLVAMVVKLSEVTFRPLFFKLFDWAKTEDAPKDRLLTFYNLADCIAEKLKGLFTLFAGHLVKPFADTLNQVNISKTDEAFFDSENDPEKCCLLLQFILNCLYKIFLFDTQHFISKERAEALMMPLVDQLENRLGGEEKFQERVTKQLIPCIAQFSVAMADDSLWKPLNYQILLKTRDASPKVRFAALITVLALAEKLKENYIVLLPESIPFLAELMEDECEEVEHQCQKTIQQLETVLGEPLRSYF</sequence>
<feature type="chain" id="PRO_0000186202" description="HEAT repeat-containing protein 1">
    <location>
        <begin position="1" status="less than"/>
        <end position="958"/>
    </location>
</feature>
<feature type="repeat" description="HEAT" evidence="2">
    <location>
        <begin position="920"/>
        <end position="956"/>
    </location>
</feature>
<feature type="modified residue" description="Phosphoserine" evidence="1">
    <location>
        <position position="4"/>
    </location>
</feature>
<feature type="modified residue" description="Phosphoserine" evidence="1">
    <location>
        <position position="305"/>
    </location>
</feature>
<feature type="non-terminal residue">
    <location>
        <position position="1"/>
    </location>
</feature>
<keyword id="KW-0539">Nucleus</keyword>
<keyword id="KW-0597">Phosphoprotein</keyword>
<keyword id="KW-1185">Reference proteome</keyword>
<keyword id="KW-0687">Ribonucleoprotein</keyword>
<keyword id="KW-0690">Ribosome biogenesis</keyword>
<keyword id="KW-0698">rRNA processing</keyword>
<keyword id="KW-0804">Transcription</keyword>
<keyword id="KW-0805">Transcription regulation</keyword>
<protein>
    <recommendedName>
        <fullName>HEAT repeat-containing protein 1</fullName>
    </recommendedName>
    <alternativeName>
        <fullName>Protein BAP28</fullName>
    </alternativeName>
</protein>
<organism>
    <name type="scientific">Macaca fascicularis</name>
    <name type="common">Crab-eating macaque</name>
    <name type="synonym">Cynomolgus monkey</name>
    <dbReference type="NCBI Taxonomy" id="9541"/>
    <lineage>
        <taxon>Eukaryota</taxon>
        <taxon>Metazoa</taxon>
        <taxon>Chordata</taxon>
        <taxon>Craniata</taxon>
        <taxon>Vertebrata</taxon>
        <taxon>Euteleostomi</taxon>
        <taxon>Mammalia</taxon>
        <taxon>Eutheria</taxon>
        <taxon>Euarchontoglires</taxon>
        <taxon>Primates</taxon>
        <taxon>Haplorrhini</taxon>
        <taxon>Catarrhini</taxon>
        <taxon>Cercopithecidae</taxon>
        <taxon>Cercopithecinae</taxon>
        <taxon>Macaca</taxon>
    </lineage>
</organism>
<proteinExistence type="evidence at transcript level"/>
<dbReference type="EMBL" id="AB049842">
    <property type="protein sequence ID" value="BAB16728.1"/>
    <property type="status" value="ALT_INIT"/>
    <property type="molecule type" value="mRNA"/>
</dbReference>
<dbReference type="SMR" id="Q9GM44"/>
<dbReference type="STRING" id="9541.ENSMFAP00000026606"/>
<dbReference type="eggNOG" id="KOG1837">
    <property type="taxonomic scope" value="Eukaryota"/>
</dbReference>
<dbReference type="OrthoDB" id="31183at2759"/>
<dbReference type="Proteomes" id="UP000233100">
    <property type="component" value="Unplaced"/>
</dbReference>
<dbReference type="GO" id="GO:0030686">
    <property type="term" value="C:90S preribosome"/>
    <property type="evidence" value="ECO:0007669"/>
    <property type="project" value="TreeGrafter"/>
</dbReference>
<dbReference type="GO" id="GO:0005730">
    <property type="term" value="C:nucleolus"/>
    <property type="evidence" value="ECO:0000250"/>
    <property type="project" value="UniProtKB"/>
</dbReference>
<dbReference type="GO" id="GO:0032040">
    <property type="term" value="C:small-subunit processome"/>
    <property type="evidence" value="ECO:0000250"/>
    <property type="project" value="UniProtKB"/>
</dbReference>
<dbReference type="GO" id="GO:0034455">
    <property type="term" value="C:t-UTP complex"/>
    <property type="evidence" value="ECO:0007669"/>
    <property type="project" value="TreeGrafter"/>
</dbReference>
<dbReference type="GO" id="GO:0030515">
    <property type="term" value="F:snoRNA binding"/>
    <property type="evidence" value="ECO:0007669"/>
    <property type="project" value="TreeGrafter"/>
</dbReference>
<dbReference type="GO" id="GO:0000462">
    <property type="term" value="P:maturation of SSU-rRNA from tricistronic rRNA transcript (SSU-rRNA, 5.8S rRNA, LSU-rRNA)"/>
    <property type="evidence" value="ECO:0007669"/>
    <property type="project" value="TreeGrafter"/>
</dbReference>
<dbReference type="GO" id="GO:0061351">
    <property type="term" value="P:neural precursor cell proliferation"/>
    <property type="evidence" value="ECO:0000250"/>
    <property type="project" value="UniProtKB"/>
</dbReference>
<dbReference type="GO" id="GO:0045943">
    <property type="term" value="P:positive regulation of transcription by RNA polymerase I"/>
    <property type="evidence" value="ECO:0007669"/>
    <property type="project" value="TreeGrafter"/>
</dbReference>
<dbReference type="GO" id="GO:1902570">
    <property type="term" value="P:protein localization to nucleolus"/>
    <property type="evidence" value="ECO:0000250"/>
    <property type="project" value="UniProtKB"/>
</dbReference>
<dbReference type="GO" id="GO:0042274">
    <property type="term" value="P:ribosomal small subunit biogenesis"/>
    <property type="evidence" value="ECO:0000250"/>
    <property type="project" value="UniProtKB"/>
</dbReference>
<dbReference type="GO" id="GO:0016072">
    <property type="term" value="P:rRNA metabolic process"/>
    <property type="evidence" value="ECO:0000250"/>
    <property type="project" value="UniProtKB"/>
</dbReference>
<dbReference type="FunFam" id="1.25.10.10:FF:000534">
    <property type="entry name" value="HEAT repeat containing 1"/>
    <property type="match status" value="1"/>
</dbReference>
<dbReference type="Gene3D" id="1.25.10.10">
    <property type="entry name" value="Leucine-rich Repeat Variant"/>
    <property type="match status" value="2"/>
</dbReference>
<dbReference type="InterPro" id="IPR011989">
    <property type="entry name" value="ARM-like"/>
</dbReference>
<dbReference type="InterPro" id="IPR016024">
    <property type="entry name" value="ARM-type_fold"/>
</dbReference>
<dbReference type="InterPro" id="IPR012954">
    <property type="entry name" value="BP28_C_dom"/>
</dbReference>
<dbReference type="InterPro" id="IPR056473">
    <property type="entry name" value="HEAT_Utp10/HEAT1"/>
</dbReference>
<dbReference type="InterPro" id="IPR040191">
    <property type="entry name" value="UTP10"/>
</dbReference>
<dbReference type="PANTHER" id="PTHR13457">
    <property type="entry name" value="BAP28"/>
    <property type="match status" value="1"/>
</dbReference>
<dbReference type="PANTHER" id="PTHR13457:SF1">
    <property type="entry name" value="HEAT REPEAT-CONTAINING PROTEIN 1"/>
    <property type="match status" value="1"/>
</dbReference>
<dbReference type="Pfam" id="PF08146">
    <property type="entry name" value="BP28CT"/>
    <property type="match status" value="1"/>
</dbReference>
<dbReference type="Pfam" id="PF23243">
    <property type="entry name" value="HEAT_HEATR1"/>
    <property type="match status" value="1"/>
</dbReference>
<dbReference type="SMART" id="SM01036">
    <property type="entry name" value="BP28CT"/>
    <property type="match status" value="1"/>
</dbReference>
<dbReference type="SUPFAM" id="SSF48371">
    <property type="entry name" value="ARM repeat"/>
    <property type="match status" value="1"/>
</dbReference>